<gene>
    <name evidence="2" type="primary">hpaIIR</name>
</gene>
<keyword id="KW-0255">Endonuclease</keyword>
<keyword id="KW-0378">Hydrolase</keyword>
<keyword id="KW-0540">Nuclease</keyword>
<keyword id="KW-0680">Restriction system</keyword>
<proteinExistence type="predicted"/>
<reference key="1">
    <citation type="journal article" date="1994" name="Gene">
        <title>Organization and sequence of the HpaII restriction-modification system and adjacent genes.</title>
        <authorList>
            <person name="Kulakauskas S."/>
            <person name="Barsomian J.M."/>
            <person name="Lubys A."/>
            <person name="Roberts R.J."/>
            <person name="Wilson G.G."/>
        </authorList>
    </citation>
    <scope>NUCLEOTIDE SEQUENCE [GENOMIC DNA]</scope>
    <source>
        <strain>ATCC 49669</strain>
    </source>
</reference>
<reference key="2">
    <citation type="journal article" date="2003" name="Nucleic Acids Res.">
        <title>A nomenclature for restriction enzymes, DNA methyltransferases, homing endonucleases and their genes.</title>
        <authorList>
            <person name="Roberts R.J."/>
            <person name="Belfort M."/>
            <person name="Bestor T."/>
            <person name="Bhagwat A.S."/>
            <person name="Bickle T.A."/>
            <person name="Bitinaite J."/>
            <person name="Blumenthal R.M."/>
            <person name="Degtyarev S.K."/>
            <person name="Dryden D.T."/>
            <person name="Dybvig K."/>
            <person name="Firman K."/>
            <person name="Gromova E.S."/>
            <person name="Gumport R.I."/>
            <person name="Halford S.E."/>
            <person name="Hattman S."/>
            <person name="Heitman J."/>
            <person name="Hornby D.P."/>
            <person name="Janulaitis A."/>
            <person name="Jeltsch A."/>
            <person name="Josephsen J."/>
            <person name="Kiss A."/>
            <person name="Klaenhammer T.R."/>
            <person name="Kobayashi I."/>
            <person name="Kong H."/>
            <person name="Krueger D.H."/>
            <person name="Lacks S."/>
            <person name="Marinus M.G."/>
            <person name="Miyahara M."/>
            <person name="Morgan R.D."/>
            <person name="Murray N.E."/>
            <person name="Nagaraja V."/>
            <person name="Piekarowicz A."/>
            <person name="Pingoud A."/>
            <person name="Raleigh E."/>
            <person name="Rao D.N."/>
            <person name="Reich N."/>
            <person name="Repin V.E."/>
            <person name="Selker E.U."/>
            <person name="Shaw P.C."/>
            <person name="Stein D.C."/>
            <person name="Stoddard B.L."/>
            <person name="Szybalski W."/>
            <person name="Trautner T.A."/>
            <person name="Van Etten J.L."/>
            <person name="Vitor J.M."/>
            <person name="Wilson G.G."/>
            <person name="Xu S.Y."/>
        </authorList>
    </citation>
    <scope>NOMENCLATURE</scope>
    <scope>SUBTYPES</scope>
</reference>
<organism>
    <name type="scientific">Haemophilus parainfluenzae</name>
    <dbReference type="NCBI Taxonomy" id="729"/>
    <lineage>
        <taxon>Bacteria</taxon>
        <taxon>Pseudomonadati</taxon>
        <taxon>Pseudomonadota</taxon>
        <taxon>Gammaproteobacteria</taxon>
        <taxon>Pasteurellales</taxon>
        <taxon>Pasteurellaceae</taxon>
        <taxon>Haemophilus</taxon>
    </lineage>
</organism>
<accession>P36433</accession>
<feature type="chain" id="PRO_0000077325" description="Type II restriction enzyme HpaII">
    <location>
        <begin position="1"/>
        <end position="358"/>
    </location>
</feature>
<dbReference type="EC" id="3.1.21.4" evidence="3"/>
<dbReference type="EMBL" id="L17342">
    <property type="protein sequence ID" value="AAA20482.1"/>
    <property type="molecule type" value="Genomic_DNA"/>
</dbReference>
<dbReference type="REBASE" id="1159">
    <property type="entry name" value="HpaII"/>
</dbReference>
<dbReference type="PRO" id="PR:P36433"/>
<dbReference type="GO" id="GO:0009036">
    <property type="term" value="F:type II site-specific deoxyribonuclease activity"/>
    <property type="evidence" value="ECO:0007669"/>
    <property type="project" value="UniProtKB-EC"/>
</dbReference>
<dbReference type="GO" id="GO:0009307">
    <property type="term" value="P:DNA restriction-modification system"/>
    <property type="evidence" value="ECO:0007669"/>
    <property type="project" value="UniProtKB-KW"/>
</dbReference>
<dbReference type="InterPro" id="IPR019062">
    <property type="entry name" value="Restrct_endonuc_II_HpaII"/>
</dbReference>
<dbReference type="Pfam" id="PF09561">
    <property type="entry name" value="RE_HpaII"/>
    <property type="match status" value="1"/>
</dbReference>
<sequence length="358" mass="40926">MTEFFSGNRGEWSEPYALFKLLADGQLYLGDSQLNKLGIVMPILSILRQEKNYESSYILHNNSQNIIVTYNNEKFTVPISGFQEKAVLLLSEIKNASGNRAFSIPSIDDFLKKLGFTHLSASSSSKSDIHIVVHDLRTGITPTLGFSIKSQLGSPATLLNASKATNFTFKIYNLKDKQIEYINSLSGIKEKIKEIFSQDGKLEFVKVESCKFSNNLTLIDTKLPEILAEMILLYYSSKLNKIDDVTEHISRLNPLNYNLSCNHNYYEYKVKHFLNDVALGMRPDDVWLGQYDATGGYLVVKEDGELLCYHIYSKNSFEDYLYCNTKFDTPSSSRHDFGHIYQVNHDFFIKLNVQIRFL</sequence>
<name>T2H2_HAEPA</name>
<evidence type="ECO:0000303" key="1">
    <source>
    </source>
</evidence>
<evidence type="ECO:0000303" key="2">
    <source>
    </source>
</evidence>
<evidence type="ECO:0000305" key="3">
    <source>
    </source>
</evidence>
<comment type="function">
    <text evidence="1 3">An E and P subtype restriction enzyme that recognizes the double-stranded sequence 5'-CCGG-3' and cleaves after C-1.</text>
</comment>
<comment type="catalytic activity">
    <reaction evidence="3">
        <text>Endonucleolytic cleavage of DNA to give specific double-stranded fragments with terminal 5'-phosphates.</text>
        <dbReference type="EC" id="3.1.21.4"/>
    </reaction>
</comment>
<comment type="subunit">
    <text>Homodimer.</text>
</comment>
<protein>
    <recommendedName>
        <fullName evidence="1">Type II restriction enzyme HpaII</fullName>
        <shortName>R.HpaII</shortName>
        <ecNumber evidence="3">3.1.21.4</ecNumber>
    </recommendedName>
    <alternativeName>
        <fullName>Endonuclease HpaII</fullName>
    </alternativeName>
    <alternativeName>
        <fullName>Type-2 restriction enzyme HpaII</fullName>
    </alternativeName>
</protein>